<reference key="1">
    <citation type="journal article" date="2008" name="BMC Genomics">
        <title>The genome of Aeromonas salmonicida subsp. salmonicida A449: insights into the evolution of a fish pathogen.</title>
        <authorList>
            <person name="Reith M.E."/>
            <person name="Singh R.K."/>
            <person name="Curtis B."/>
            <person name="Boyd J.M."/>
            <person name="Bouevitch A."/>
            <person name="Kimball J."/>
            <person name="Munholland J."/>
            <person name="Murphy C."/>
            <person name="Sarty D."/>
            <person name="Williams J."/>
            <person name="Nash J.H."/>
            <person name="Johnson S.C."/>
            <person name="Brown L.L."/>
        </authorList>
    </citation>
    <scope>NUCLEOTIDE SEQUENCE [LARGE SCALE GENOMIC DNA]</scope>
    <source>
        <strain>A449</strain>
    </source>
</reference>
<keyword id="KW-0054">Arabinose catabolism</keyword>
<keyword id="KW-0119">Carbohydrate metabolism</keyword>
<keyword id="KW-0413">Isomerase</keyword>
<keyword id="KW-0464">Manganese</keyword>
<keyword id="KW-0479">Metal-binding</keyword>
<accession>A4SNH3</accession>
<name>ARAA_AERS4</name>
<feature type="chain" id="PRO_0000312598" description="L-arabinose isomerase">
    <location>
        <begin position="1"/>
        <end position="499"/>
    </location>
</feature>
<feature type="binding site" evidence="1">
    <location>
        <position position="306"/>
    </location>
    <ligand>
        <name>Mn(2+)</name>
        <dbReference type="ChEBI" id="CHEBI:29035"/>
    </ligand>
</feature>
<feature type="binding site" evidence="1">
    <location>
        <position position="333"/>
    </location>
    <ligand>
        <name>Mn(2+)</name>
        <dbReference type="ChEBI" id="CHEBI:29035"/>
    </ligand>
</feature>
<feature type="binding site" evidence="1">
    <location>
        <position position="350"/>
    </location>
    <ligand>
        <name>Mn(2+)</name>
        <dbReference type="ChEBI" id="CHEBI:29035"/>
    </ligand>
</feature>
<feature type="binding site" evidence="1">
    <location>
        <position position="449"/>
    </location>
    <ligand>
        <name>Mn(2+)</name>
        <dbReference type="ChEBI" id="CHEBI:29035"/>
    </ligand>
</feature>
<proteinExistence type="inferred from homology"/>
<protein>
    <recommendedName>
        <fullName evidence="1">L-arabinose isomerase</fullName>
        <ecNumber evidence="1">5.3.1.4</ecNumber>
    </recommendedName>
</protein>
<sequence>MEFMKQLEVWFLVGSQHLYSATTLKQVADHAHTMTSQLNEGAGLPIKIVLKPTGTTLDEISSVARDANHSEQCVGLMVWMHTFSPAKMWIPALSQLQKPLLQFHTQFNRDLPWSEIDMDFMNLNQTAHGGREFGFMGARLRLPRTVVVGHWQDEEAWSKIGNWMRIAAAIHDSRHLKIARFGDNMRNVAVTEGDKIEAQIQFGYQVNYHPVGDLVKIIDAVPAADIEALLAEYEQSYTLTEAVQAGGPLRASLYEAARQELGMKKFLTEGGFGAFTTTFEDLHGLHQLPGLACQRLMQQGFGFGAEGDWKTAALLRTIKVMGTGLAGGTSFMEDYTYHLEAGNNLVLGSHMLEVCPSIAADKPVLDAQHLGIGKKADPARLLFAAPAGKAVNASLIDMGNRFRLVVNQLEVVDLPEAMPKLPVASALWKPLPSLQTSAEAWILAGAAHHSVFTQSVDIEQLRTFADIMGIEFVVIDEHTRIPALKETLRWNEVYYKICH</sequence>
<dbReference type="EC" id="5.3.1.4" evidence="1"/>
<dbReference type="EMBL" id="CP000644">
    <property type="protein sequence ID" value="ABO90445.1"/>
    <property type="molecule type" value="Genomic_DNA"/>
</dbReference>
<dbReference type="RefSeq" id="WP_005310816.1">
    <property type="nucleotide sequence ID" value="NC_009348.1"/>
</dbReference>
<dbReference type="SMR" id="A4SNH3"/>
<dbReference type="STRING" id="29491.GCA_000820065_01529"/>
<dbReference type="KEGG" id="asa:ASA_2399"/>
<dbReference type="eggNOG" id="COG2160">
    <property type="taxonomic scope" value="Bacteria"/>
</dbReference>
<dbReference type="HOGENOM" id="CLU_045663_0_0_6"/>
<dbReference type="UniPathway" id="UPA00145">
    <property type="reaction ID" value="UER00565"/>
</dbReference>
<dbReference type="Proteomes" id="UP000000225">
    <property type="component" value="Chromosome"/>
</dbReference>
<dbReference type="GO" id="GO:0005829">
    <property type="term" value="C:cytosol"/>
    <property type="evidence" value="ECO:0007669"/>
    <property type="project" value="TreeGrafter"/>
</dbReference>
<dbReference type="GO" id="GO:0008733">
    <property type="term" value="F:L-arabinose isomerase activity"/>
    <property type="evidence" value="ECO:0007669"/>
    <property type="project" value="UniProtKB-UniRule"/>
</dbReference>
<dbReference type="GO" id="GO:0030145">
    <property type="term" value="F:manganese ion binding"/>
    <property type="evidence" value="ECO:0007669"/>
    <property type="project" value="UniProtKB-UniRule"/>
</dbReference>
<dbReference type="GO" id="GO:0019569">
    <property type="term" value="P:L-arabinose catabolic process to xylulose 5-phosphate"/>
    <property type="evidence" value="ECO:0007669"/>
    <property type="project" value="UniProtKB-UniRule"/>
</dbReference>
<dbReference type="CDD" id="cd03557">
    <property type="entry name" value="L-arabinose_isomerase"/>
    <property type="match status" value="1"/>
</dbReference>
<dbReference type="Gene3D" id="3.40.50.10940">
    <property type="match status" value="1"/>
</dbReference>
<dbReference type="HAMAP" id="MF_00519">
    <property type="entry name" value="Arabinose_Isome"/>
    <property type="match status" value="1"/>
</dbReference>
<dbReference type="InterPro" id="IPR024664">
    <property type="entry name" value="Ara_Isoase_C"/>
</dbReference>
<dbReference type="InterPro" id="IPR055390">
    <property type="entry name" value="AraA_central"/>
</dbReference>
<dbReference type="InterPro" id="IPR055389">
    <property type="entry name" value="AraA_N"/>
</dbReference>
<dbReference type="InterPro" id="IPR038583">
    <property type="entry name" value="AraA_N_sf"/>
</dbReference>
<dbReference type="InterPro" id="IPR004216">
    <property type="entry name" value="Fuc/Ara_isomerase_C"/>
</dbReference>
<dbReference type="InterPro" id="IPR009015">
    <property type="entry name" value="Fucose_isomerase_N/cen_sf"/>
</dbReference>
<dbReference type="InterPro" id="IPR003762">
    <property type="entry name" value="Lara_isomerase"/>
</dbReference>
<dbReference type="NCBIfam" id="NF002795">
    <property type="entry name" value="PRK02929.1"/>
    <property type="match status" value="1"/>
</dbReference>
<dbReference type="PANTHER" id="PTHR38464">
    <property type="entry name" value="L-ARABINOSE ISOMERASE"/>
    <property type="match status" value="1"/>
</dbReference>
<dbReference type="PANTHER" id="PTHR38464:SF1">
    <property type="entry name" value="L-ARABINOSE ISOMERASE"/>
    <property type="match status" value="1"/>
</dbReference>
<dbReference type="Pfam" id="PF24856">
    <property type="entry name" value="AraA_central"/>
    <property type="match status" value="1"/>
</dbReference>
<dbReference type="Pfam" id="PF02610">
    <property type="entry name" value="AraA_N"/>
    <property type="match status" value="1"/>
</dbReference>
<dbReference type="Pfam" id="PF11762">
    <property type="entry name" value="Arabinose_Iso_C"/>
    <property type="match status" value="1"/>
</dbReference>
<dbReference type="PIRSF" id="PIRSF001478">
    <property type="entry name" value="L-ara_isomerase"/>
    <property type="match status" value="1"/>
</dbReference>
<dbReference type="SUPFAM" id="SSF50443">
    <property type="entry name" value="FucI/AraA C-terminal domain-like"/>
    <property type="match status" value="1"/>
</dbReference>
<dbReference type="SUPFAM" id="SSF53743">
    <property type="entry name" value="FucI/AraA N-terminal and middle domains"/>
    <property type="match status" value="1"/>
</dbReference>
<evidence type="ECO:0000255" key="1">
    <source>
        <dbReference type="HAMAP-Rule" id="MF_00519"/>
    </source>
</evidence>
<organism>
    <name type="scientific">Aeromonas salmonicida (strain A449)</name>
    <dbReference type="NCBI Taxonomy" id="382245"/>
    <lineage>
        <taxon>Bacteria</taxon>
        <taxon>Pseudomonadati</taxon>
        <taxon>Pseudomonadota</taxon>
        <taxon>Gammaproteobacteria</taxon>
        <taxon>Aeromonadales</taxon>
        <taxon>Aeromonadaceae</taxon>
        <taxon>Aeromonas</taxon>
    </lineage>
</organism>
<gene>
    <name evidence="1" type="primary">araA</name>
    <name type="ordered locus">ASA_2399</name>
</gene>
<comment type="function">
    <text evidence="1">Catalyzes the conversion of L-arabinose to L-ribulose.</text>
</comment>
<comment type="catalytic activity">
    <reaction evidence="1">
        <text>beta-L-arabinopyranose = L-ribulose</text>
        <dbReference type="Rhea" id="RHEA:14821"/>
        <dbReference type="ChEBI" id="CHEBI:16880"/>
        <dbReference type="ChEBI" id="CHEBI:40886"/>
        <dbReference type="EC" id="5.3.1.4"/>
    </reaction>
</comment>
<comment type="cofactor">
    <cofactor evidence="1">
        <name>Mn(2+)</name>
        <dbReference type="ChEBI" id="CHEBI:29035"/>
    </cofactor>
    <text evidence="1">Binds 1 Mn(2+) ion per subunit.</text>
</comment>
<comment type="pathway">
    <text evidence="1">Carbohydrate degradation; L-arabinose degradation via L-ribulose; D-xylulose 5-phosphate from L-arabinose (bacterial route): step 1/3.</text>
</comment>
<comment type="similarity">
    <text evidence="1">Belongs to the arabinose isomerase family.</text>
</comment>